<evidence type="ECO:0000255" key="1">
    <source>
        <dbReference type="HAMAP-Rule" id="MF_00244"/>
    </source>
</evidence>
<feature type="chain" id="PRO_1000125339" description="Probable nicotinate-nucleotide adenylyltransferase">
    <location>
        <begin position="1"/>
        <end position="189"/>
    </location>
</feature>
<protein>
    <recommendedName>
        <fullName evidence="1">Probable nicotinate-nucleotide adenylyltransferase</fullName>
        <ecNumber evidence="1">2.7.7.18</ecNumber>
    </recommendedName>
    <alternativeName>
        <fullName evidence="1">Deamido-NAD(+) diphosphorylase</fullName>
    </alternativeName>
    <alternativeName>
        <fullName evidence="1">Deamido-NAD(+) pyrophosphorylase</fullName>
    </alternativeName>
    <alternativeName>
        <fullName evidence="1">Nicotinate mononucleotide adenylyltransferase</fullName>
        <shortName evidence="1">NaMN adenylyltransferase</shortName>
    </alternativeName>
</protein>
<dbReference type="EC" id="2.7.7.18" evidence="1"/>
<dbReference type="EMBL" id="CP000227">
    <property type="protein sequence ID" value="ACM14545.1"/>
    <property type="molecule type" value="Genomic_DNA"/>
</dbReference>
<dbReference type="SMR" id="B9IY99"/>
<dbReference type="KEGG" id="bcq:BCQ_4118"/>
<dbReference type="HOGENOM" id="CLU_069765_3_1_9"/>
<dbReference type="UniPathway" id="UPA00253">
    <property type="reaction ID" value="UER00332"/>
</dbReference>
<dbReference type="Proteomes" id="UP000000441">
    <property type="component" value="Chromosome"/>
</dbReference>
<dbReference type="GO" id="GO:0005524">
    <property type="term" value="F:ATP binding"/>
    <property type="evidence" value="ECO:0007669"/>
    <property type="project" value="UniProtKB-KW"/>
</dbReference>
<dbReference type="GO" id="GO:0004515">
    <property type="term" value="F:nicotinate-nucleotide adenylyltransferase activity"/>
    <property type="evidence" value="ECO:0007669"/>
    <property type="project" value="UniProtKB-UniRule"/>
</dbReference>
<dbReference type="GO" id="GO:0009435">
    <property type="term" value="P:NAD biosynthetic process"/>
    <property type="evidence" value="ECO:0007669"/>
    <property type="project" value="UniProtKB-UniRule"/>
</dbReference>
<dbReference type="CDD" id="cd02165">
    <property type="entry name" value="NMNAT"/>
    <property type="match status" value="1"/>
</dbReference>
<dbReference type="FunFam" id="3.40.50.620:FF:000079">
    <property type="entry name" value="Probable nicotinate-nucleotide adenylyltransferase"/>
    <property type="match status" value="1"/>
</dbReference>
<dbReference type="Gene3D" id="3.40.50.620">
    <property type="entry name" value="HUPs"/>
    <property type="match status" value="1"/>
</dbReference>
<dbReference type="HAMAP" id="MF_00244">
    <property type="entry name" value="NaMN_adenylyltr"/>
    <property type="match status" value="1"/>
</dbReference>
<dbReference type="InterPro" id="IPR004821">
    <property type="entry name" value="Cyt_trans-like"/>
</dbReference>
<dbReference type="InterPro" id="IPR005248">
    <property type="entry name" value="NadD/NMNAT"/>
</dbReference>
<dbReference type="InterPro" id="IPR014729">
    <property type="entry name" value="Rossmann-like_a/b/a_fold"/>
</dbReference>
<dbReference type="NCBIfam" id="TIGR00125">
    <property type="entry name" value="cyt_tran_rel"/>
    <property type="match status" value="1"/>
</dbReference>
<dbReference type="NCBIfam" id="TIGR00482">
    <property type="entry name" value="nicotinate (nicotinamide) nucleotide adenylyltransferase"/>
    <property type="match status" value="1"/>
</dbReference>
<dbReference type="NCBIfam" id="NF000840">
    <property type="entry name" value="PRK00071.1-3"/>
    <property type="match status" value="1"/>
</dbReference>
<dbReference type="NCBIfam" id="NF000841">
    <property type="entry name" value="PRK00071.1-4"/>
    <property type="match status" value="1"/>
</dbReference>
<dbReference type="PANTHER" id="PTHR39321">
    <property type="entry name" value="NICOTINATE-NUCLEOTIDE ADENYLYLTRANSFERASE-RELATED"/>
    <property type="match status" value="1"/>
</dbReference>
<dbReference type="PANTHER" id="PTHR39321:SF3">
    <property type="entry name" value="PHOSPHOPANTETHEINE ADENYLYLTRANSFERASE"/>
    <property type="match status" value="1"/>
</dbReference>
<dbReference type="Pfam" id="PF01467">
    <property type="entry name" value="CTP_transf_like"/>
    <property type="match status" value="1"/>
</dbReference>
<dbReference type="SUPFAM" id="SSF52374">
    <property type="entry name" value="Nucleotidylyl transferase"/>
    <property type="match status" value="1"/>
</dbReference>
<proteinExistence type="inferred from homology"/>
<reference key="1">
    <citation type="journal article" date="2009" name="J. Bacteriol.">
        <title>Complete genome sequence of the extremophilic Bacillus cereus strain Q1 with industrial applications.</title>
        <authorList>
            <person name="Xiong Z."/>
            <person name="Jiang Y."/>
            <person name="Qi D."/>
            <person name="Lu H."/>
            <person name="Yang F."/>
            <person name="Yang J."/>
            <person name="Chen L."/>
            <person name="Sun L."/>
            <person name="Xu X."/>
            <person name="Xue Y."/>
            <person name="Zhu Y."/>
            <person name="Jin Q."/>
        </authorList>
    </citation>
    <scope>NUCLEOTIDE SEQUENCE [LARGE SCALE GENOMIC DNA]</scope>
    <source>
        <strain>Q1</strain>
    </source>
</reference>
<accession>B9IY99</accession>
<sequence>MRKIGIIGGTFDPPHYGHLLIANEVYHALNLEEVWFLPNQIPPHKQGRNITSVESRLQMLELATEEEEHFSICLEELSRKGPSYTYDTMLQLTKKHPDVQFHFIIGGDMVEYLPKWYNIEALLDLVTFVGVARPGYTLHTPYPITTVEIPEFAVSSSLLRERYKEKKTCKYLLPEKVQVYIERNGLYES</sequence>
<name>NADD_BACCQ</name>
<comment type="function">
    <text evidence="1">Catalyzes the reversible adenylation of nicotinate mononucleotide (NaMN) to nicotinic acid adenine dinucleotide (NaAD).</text>
</comment>
<comment type="catalytic activity">
    <reaction evidence="1">
        <text>nicotinate beta-D-ribonucleotide + ATP + H(+) = deamido-NAD(+) + diphosphate</text>
        <dbReference type="Rhea" id="RHEA:22860"/>
        <dbReference type="ChEBI" id="CHEBI:15378"/>
        <dbReference type="ChEBI" id="CHEBI:30616"/>
        <dbReference type="ChEBI" id="CHEBI:33019"/>
        <dbReference type="ChEBI" id="CHEBI:57502"/>
        <dbReference type="ChEBI" id="CHEBI:58437"/>
        <dbReference type="EC" id="2.7.7.18"/>
    </reaction>
</comment>
<comment type="pathway">
    <text evidence="1">Cofactor biosynthesis; NAD(+) biosynthesis; deamido-NAD(+) from nicotinate D-ribonucleotide: step 1/1.</text>
</comment>
<comment type="similarity">
    <text evidence="1">Belongs to the NadD family.</text>
</comment>
<organism>
    <name type="scientific">Bacillus cereus (strain Q1)</name>
    <dbReference type="NCBI Taxonomy" id="361100"/>
    <lineage>
        <taxon>Bacteria</taxon>
        <taxon>Bacillati</taxon>
        <taxon>Bacillota</taxon>
        <taxon>Bacilli</taxon>
        <taxon>Bacillales</taxon>
        <taxon>Bacillaceae</taxon>
        <taxon>Bacillus</taxon>
        <taxon>Bacillus cereus group</taxon>
    </lineage>
</organism>
<gene>
    <name evidence="1" type="primary">nadD</name>
    <name type="ordered locus">BCQ_4118</name>
</gene>
<keyword id="KW-0067">ATP-binding</keyword>
<keyword id="KW-0520">NAD</keyword>
<keyword id="KW-0547">Nucleotide-binding</keyword>
<keyword id="KW-0548">Nucleotidyltransferase</keyword>
<keyword id="KW-0662">Pyridine nucleotide biosynthesis</keyword>
<keyword id="KW-0808">Transferase</keyword>